<reference key="1">
    <citation type="submission" date="2004-07" db="EMBL/GenBank/DDBJ databases">
        <authorList>
            <consortium name="NIH - Zebrafish Gene Collection (ZGC) project"/>
        </authorList>
    </citation>
    <scope>NUCLEOTIDE SEQUENCE [LARGE SCALE MRNA]</scope>
    <source>
        <tissue>Embryo</tissue>
    </source>
</reference>
<name>LTOR2_DANRE</name>
<feature type="chain" id="PRO_0000240661" description="Ragulator complex protein LAMTOR2">
    <location>
        <begin position="1"/>
        <end position="125"/>
    </location>
</feature>
<feature type="region of interest" description="Required for location at endosomes" evidence="1">
    <location>
        <begin position="57"/>
        <end position="70"/>
    </location>
</feature>
<sequence>MLRPKALTQVLSQANTSGVQSTLLLNNEGSLLTYSGYGDTDARVTAAIASNIWAAYDKNGHQAFNEDKLKFILMDCMEGRVAITRVANLLLCMYAKETVGFGMLKAKAEALVQYLEEPLTQVAAS</sequence>
<evidence type="ECO:0000250" key="1"/>
<evidence type="ECO:0000250" key="2">
    <source>
        <dbReference type="UniProtKB" id="Q9JHS3"/>
    </source>
</evidence>
<evidence type="ECO:0000250" key="3">
    <source>
        <dbReference type="UniProtKB" id="Q9Y2Q5"/>
    </source>
</evidence>
<evidence type="ECO:0000305" key="4"/>
<gene>
    <name type="primary">lamtor2</name>
    <name type="ORF">zgc:100811</name>
</gene>
<accession>Q6DEG4</accession>
<dbReference type="EMBL" id="BC077153">
    <property type="protein sequence ID" value="AAH77153.1"/>
    <property type="molecule type" value="mRNA"/>
</dbReference>
<dbReference type="SMR" id="Q6DEG4"/>
<dbReference type="FunCoup" id="Q6DEG4">
    <property type="interactions" value="1551"/>
</dbReference>
<dbReference type="STRING" id="7955.ENSDARP00000058324"/>
<dbReference type="PaxDb" id="7955-ENSDARP00000058324"/>
<dbReference type="AGR" id="ZFIN:ZDB-GENE-040801-63"/>
<dbReference type="ZFIN" id="ZDB-GENE-040801-63">
    <property type="gene designation" value="lamtor2"/>
</dbReference>
<dbReference type="eggNOG" id="KOG4107">
    <property type="taxonomic scope" value="Eukaryota"/>
</dbReference>
<dbReference type="InParanoid" id="Q6DEG4"/>
<dbReference type="PhylomeDB" id="Q6DEG4"/>
<dbReference type="Reactome" id="R-DRE-1632852">
    <property type="pathway name" value="Macroautophagy"/>
</dbReference>
<dbReference type="Reactome" id="R-DRE-165159">
    <property type="pathway name" value="MTOR signalling"/>
</dbReference>
<dbReference type="Reactome" id="R-DRE-166208">
    <property type="pathway name" value="mTORC1-mediated signalling"/>
</dbReference>
<dbReference type="Reactome" id="R-DRE-380972">
    <property type="pathway name" value="Energy dependent regulation of mTOR by LKB1-AMPK"/>
</dbReference>
<dbReference type="Reactome" id="R-DRE-5628897">
    <property type="pathway name" value="TP53 Regulates Metabolic Genes"/>
</dbReference>
<dbReference type="Reactome" id="R-DRE-5674135">
    <property type="pathway name" value="MAP2K and MAPK activation"/>
</dbReference>
<dbReference type="Reactome" id="R-DRE-6798695">
    <property type="pathway name" value="Neutrophil degranulation"/>
</dbReference>
<dbReference type="Reactome" id="R-DRE-8943724">
    <property type="pathway name" value="Regulation of PTEN gene transcription"/>
</dbReference>
<dbReference type="Reactome" id="R-DRE-9639288">
    <property type="pathway name" value="Amino acids regulate mTORC1"/>
</dbReference>
<dbReference type="PRO" id="PR:Q6DEG4"/>
<dbReference type="Proteomes" id="UP000000437">
    <property type="component" value="Unplaced"/>
</dbReference>
<dbReference type="GO" id="GO:0005770">
    <property type="term" value="C:late endosome"/>
    <property type="evidence" value="ECO:0000250"/>
    <property type="project" value="UniProtKB"/>
</dbReference>
<dbReference type="GO" id="GO:0031902">
    <property type="term" value="C:late endosome membrane"/>
    <property type="evidence" value="ECO:0007669"/>
    <property type="project" value="UniProtKB-SubCell"/>
</dbReference>
<dbReference type="GO" id="GO:0005765">
    <property type="term" value="C:lysosomal membrane"/>
    <property type="evidence" value="ECO:0000250"/>
    <property type="project" value="UniProtKB"/>
</dbReference>
<dbReference type="GO" id="GO:0071986">
    <property type="term" value="C:Ragulator complex"/>
    <property type="evidence" value="ECO:0000250"/>
    <property type="project" value="UniProtKB"/>
</dbReference>
<dbReference type="GO" id="GO:0005085">
    <property type="term" value="F:guanyl-nucleotide exchange factor activity"/>
    <property type="evidence" value="ECO:0007669"/>
    <property type="project" value="InterPro"/>
</dbReference>
<dbReference type="GO" id="GO:0060090">
    <property type="term" value="F:molecular adaptor activity"/>
    <property type="evidence" value="ECO:0007669"/>
    <property type="project" value="InterPro"/>
</dbReference>
<dbReference type="GO" id="GO:0071230">
    <property type="term" value="P:cellular response to amino acid stimulus"/>
    <property type="evidence" value="ECO:0000250"/>
    <property type="project" value="UniProtKB"/>
</dbReference>
<dbReference type="GO" id="GO:0032008">
    <property type="term" value="P:positive regulation of TOR signaling"/>
    <property type="evidence" value="ECO:0000250"/>
    <property type="project" value="UniProtKB"/>
</dbReference>
<dbReference type="GO" id="GO:1904263">
    <property type="term" value="P:positive regulation of TORC1 signaling"/>
    <property type="evidence" value="ECO:0000250"/>
    <property type="project" value="UniProtKB"/>
</dbReference>
<dbReference type="GO" id="GO:0008104">
    <property type="term" value="P:protein localization"/>
    <property type="evidence" value="ECO:0000250"/>
    <property type="project" value="UniProtKB"/>
</dbReference>
<dbReference type="GO" id="GO:0001558">
    <property type="term" value="P:regulation of cell growth"/>
    <property type="evidence" value="ECO:0000250"/>
    <property type="project" value="UniProtKB"/>
</dbReference>
<dbReference type="FunFam" id="3.30.450.30:FF:000004">
    <property type="entry name" value="ragulator complex protein LAMTOR2"/>
    <property type="match status" value="1"/>
</dbReference>
<dbReference type="Gene3D" id="3.30.450.30">
    <property type="entry name" value="Dynein light chain 2a, cytoplasmic"/>
    <property type="match status" value="1"/>
</dbReference>
<dbReference type="InterPro" id="IPR037587">
    <property type="entry name" value="LAMTOR2-like"/>
</dbReference>
<dbReference type="InterPro" id="IPR004942">
    <property type="entry name" value="Roadblock/LAMTOR2_dom"/>
</dbReference>
<dbReference type="PANTHER" id="PTHR13323">
    <property type="entry name" value="LATE ENDOSOMAL/LYSOSOMAL MP1 INTERACTING PROTEIN"/>
    <property type="match status" value="1"/>
</dbReference>
<dbReference type="Pfam" id="PF03259">
    <property type="entry name" value="Robl_LC7"/>
    <property type="match status" value="1"/>
</dbReference>
<dbReference type="SMART" id="SM00960">
    <property type="entry name" value="Robl_LC7"/>
    <property type="match status" value="1"/>
</dbReference>
<dbReference type="SUPFAM" id="SSF103196">
    <property type="entry name" value="Roadblock/LC7 domain"/>
    <property type="match status" value="1"/>
</dbReference>
<comment type="function">
    <text evidence="3">As part of the Ragulator complex it is involved in amino acid sensing and activation of mTORC1, a signaling complex promoting cell growth in response to growth factors, energy levels, and amino acids. Activated by amino acids through a mechanism involving the lysosomal V-ATPase, the Ragulator plays a dual role for the small GTPases Rag (RagA/RRAGA, RagB/RRAGB, RagC/RRAGC and/or RagD/RRAGD): it (1) acts as a guanine nucleotide exchange factor (GEF), activating the small GTPases Rag and (2) mediates recruitment of Rag GTPases to the lysosome membrane. Activated Ragulator and Rag GTPases function as a scaffold recruiting mTORC1 to lysosomes where it is in turn activated.</text>
</comment>
<comment type="subunit">
    <text evidence="3">Part of the Ragulator complex composed of lamtor1, lamtor2, lamtor3, lamtor4 and lamtor5. The Ragulator complex interacts with slc38a9; the probable amino acid sensor. Component of the lysosomal folliculin complex (LFC).</text>
</comment>
<comment type="subcellular location">
    <subcellularLocation>
        <location evidence="2">Late endosome membrane</location>
        <topology evidence="2">Peripheral membrane protein</topology>
        <orientation evidence="2">Cytoplasmic side</orientation>
    </subcellularLocation>
    <subcellularLocation>
        <location evidence="2">Lysosome membrane</location>
        <topology evidence="2">Peripheral membrane protein</topology>
        <orientation evidence="2">Cytoplasmic side</orientation>
    </subcellularLocation>
    <text evidence="2">Recruited to lysosome and endosome membranes by LAMTOR1.</text>
</comment>
<comment type="similarity">
    <text evidence="4">Belongs to the GAMAD family.</text>
</comment>
<protein>
    <recommendedName>
        <fullName>Ragulator complex protein LAMTOR2</fullName>
    </recommendedName>
    <alternativeName>
        <fullName>Late endosomal/lysosomal adaptor and MAPK and MTOR activator 2</fullName>
    </alternativeName>
</protein>
<proteinExistence type="evidence at transcript level"/>
<keyword id="KW-0967">Endosome</keyword>
<keyword id="KW-0458">Lysosome</keyword>
<keyword id="KW-0472">Membrane</keyword>
<keyword id="KW-1185">Reference proteome</keyword>
<organism>
    <name type="scientific">Danio rerio</name>
    <name type="common">Zebrafish</name>
    <name type="synonym">Brachydanio rerio</name>
    <dbReference type="NCBI Taxonomy" id="7955"/>
    <lineage>
        <taxon>Eukaryota</taxon>
        <taxon>Metazoa</taxon>
        <taxon>Chordata</taxon>
        <taxon>Craniata</taxon>
        <taxon>Vertebrata</taxon>
        <taxon>Euteleostomi</taxon>
        <taxon>Actinopterygii</taxon>
        <taxon>Neopterygii</taxon>
        <taxon>Teleostei</taxon>
        <taxon>Ostariophysi</taxon>
        <taxon>Cypriniformes</taxon>
        <taxon>Danionidae</taxon>
        <taxon>Danioninae</taxon>
        <taxon>Danio</taxon>
    </lineage>
</organism>